<name>MKRN1_MOUSE</name>
<reference key="1">
    <citation type="journal article" date="2000" name="Genomics">
        <title>The ancient source of a distinct gene family encoding proteins featuring RING and C(3)H zinc-finger motifs with abundant expression in developing brain and nervous system.</title>
        <authorList>
            <person name="Gray T.A."/>
            <person name="Hernandez L."/>
            <person name="Carey A.H."/>
            <person name="Schaldach M.A."/>
            <person name="Smithwick M.J."/>
            <person name="Rus K."/>
            <person name="Marshall Graves J.A."/>
            <person name="Stewart C.L."/>
            <person name="Nicholls R.D."/>
        </authorList>
    </citation>
    <scope>NUCLEOTIDE SEQUENCE [MRNA] (ISOFORM 1)</scope>
    <scope>DEVELOPMENTAL STAGE</scope>
    <scope>TISSUE SPECIFICITY</scope>
</reference>
<reference key="2">
    <citation type="journal article" date="2003" name="Hum. Cell">
        <title>Identification of a new target molecule for a cascade therapy of polycystic kidney.</title>
        <authorList>
            <person name="Yoshida N."/>
            <person name="Yano Y."/>
            <person name="Yoshiki A."/>
            <person name="Ueno M."/>
            <person name="Deguchi N."/>
            <person name="Hirotsune S."/>
        </authorList>
    </citation>
    <scope>DISRUPTION PHENOTYPE</scope>
</reference>
<reference key="3">
    <citation type="journal article" date="2003" name="Nature">
        <title>An expressed pseudogene regulates the messenger-RNA stability of its homologous coding gene.</title>
        <authorList>
            <person name="Hirotsune S."/>
            <person name="Yoshida N."/>
            <person name="Chen A."/>
            <person name="Garrett L."/>
            <person name="Sugiyama F."/>
            <person name="Takahashi S."/>
            <person name="Yagami K."/>
            <person name="Wynshaw-Boris A."/>
            <person name="Yoshiki A."/>
        </authorList>
    </citation>
    <scope>REGULATION BY A PSEUDOGENE</scope>
    <scope>TISSUE SPECIFICITY</scope>
</reference>
<reference key="4">
    <citation type="journal article" date="2003" name="Gene Expr. Patterns">
        <title>Prader-Willi syndrome transcripts are expressed in phenotypically significant regions of the developing mouse brain.</title>
        <authorList>
            <person name="Lee S."/>
            <person name="Walker C.L."/>
            <person name="Wevrick R."/>
        </authorList>
    </citation>
    <scope>TISSUE SPECIFICITY</scope>
</reference>
<reference key="5">
    <citation type="journal article" date="2006" name="Proc. Natl. Acad. Sci. U.S.A.">
        <title>The putatively functional Mkrn1-p1 pseudogene is neither expressed nor imprinted, nor does it regulate its source gene in trans.</title>
        <authorList>
            <person name="Gray T.A."/>
            <person name="Wilson A."/>
            <person name="Fortin P.J."/>
            <person name="Nicholls R.D."/>
        </authorList>
    </citation>
    <scope>ALTERNATIVE SPLICING (ISOFORM 2)</scope>
    <scope>DISRUPTION PHENOTYPE</scope>
</reference>
<reference key="6">
    <citation type="journal article" date="2006" name="Endocrine">
        <title>Makorin RING finger protein 1 (MKRN1) has negative and positive effects on RNA polymerase II-dependent transcription.</title>
        <authorList>
            <person name="Omwancha J."/>
            <person name="Zhou X.-F."/>
            <person name="Chen S.-Y."/>
            <person name="Baslan T."/>
            <person name="Fisher C.J."/>
            <person name="Zheng Z."/>
            <person name="Cai C."/>
            <person name="Shemshedini L."/>
        </authorList>
    </citation>
    <scope>FUNCTION</scope>
</reference>
<reference key="7">
    <citation type="journal article" date="2010" name="Cell">
        <title>A tissue-specific atlas of mouse protein phosphorylation and expression.</title>
        <authorList>
            <person name="Huttlin E.L."/>
            <person name="Jedrychowski M.P."/>
            <person name="Elias J.E."/>
            <person name="Goswami T."/>
            <person name="Rad R."/>
            <person name="Beausoleil S.A."/>
            <person name="Villen J."/>
            <person name="Haas W."/>
            <person name="Sowa M.E."/>
            <person name="Gygi S.P."/>
        </authorList>
    </citation>
    <scope>IDENTIFICATION BY MASS SPECTROMETRY [LARGE SCALE ANALYSIS]</scope>
    <source>
        <tissue>Spleen</tissue>
        <tissue>Testis</tissue>
    </source>
</reference>
<proteinExistence type="evidence at protein level"/>
<sequence>MAEAAAPGTTATTSGAGAAAAAVAAASLTSIPTVAAPSPGAGGGGGGSDGSGGGWTKQVTCRYFMHGVCKEGDNCRYSHDLSDSPYGVVCKYFQRGYCVYGDRCRYEHSKPLKQEEVTATDLSAKPSLAASSSLSSGVGSLAEMNSGEAESRNPSFPTVGAGSEDWVNAIEFVPGQPYCGRTAPSCTEVPPQGSVTKEESEKEPTTVETKKQLCPYAAVGECRYGENCVYLHGDSCDMCGLQVLHPVDAAQRSQHIKSCIEAHEKDMELSFAVQRTKDMVCGICMEVVYEKANPSERRFGILSNCNHTYCLKCIRKWRSAKQFESKIIKSCPECRITSNFVIPSEYWVEEKEEKQKLIQKYKEAMSNKACRYFDEGRGSCPFGGNCFYKHAYPDGRREEPQRQKVGTSSRYRAQRRSHFWELIEERENNPFDNDEEEVVTFELGEMLLMLLAAGGDDELTDSEDEWDLFHDELEDFYDLDL</sequence>
<protein>
    <recommendedName>
        <fullName>E3 ubiquitin-protein ligase makorin-1</fullName>
        <ecNumber>2.3.2.27</ecNumber>
    </recommendedName>
    <alternativeName>
        <fullName evidence="10">RING-type E3 ubiquitin transferase makorin-1</fullName>
    </alternativeName>
</protein>
<accession>Q9QXP6</accession>
<keyword id="KW-0025">Alternative splicing</keyword>
<keyword id="KW-0479">Metal-binding</keyword>
<keyword id="KW-1185">Reference proteome</keyword>
<keyword id="KW-0677">Repeat</keyword>
<keyword id="KW-0808">Transferase</keyword>
<keyword id="KW-0832">Ubl conjugation</keyword>
<keyword id="KW-0833">Ubl conjugation pathway</keyword>
<keyword id="KW-0862">Zinc</keyword>
<keyword id="KW-0863">Zinc-finger</keyword>
<dbReference type="EC" id="2.3.2.27"/>
<dbReference type="EMBL" id="AF192785">
    <property type="protein sequence ID" value="AAF17488.1"/>
    <property type="molecule type" value="mRNA"/>
</dbReference>
<dbReference type="CCDS" id="CCDS20022.1">
    <molecule id="Q9QXP6-1"/>
</dbReference>
<dbReference type="FunCoup" id="Q9QXP6">
    <property type="interactions" value="3868"/>
</dbReference>
<dbReference type="STRING" id="10090.ENSMUSP00000031985"/>
<dbReference type="GlyGen" id="Q9QXP6">
    <property type="glycosylation" value="1 site"/>
</dbReference>
<dbReference type="iPTMnet" id="Q9QXP6"/>
<dbReference type="PhosphoSitePlus" id="Q9QXP6"/>
<dbReference type="SwissPalm" id="Q9QXP6"/>
<dbReference type="PaxDb" id="10090-ENSMUSP00000031985"/>
<dbReference type="ProteomicsDB" id="252572">
    <molecule id="Q9QXP6-1"/>
</dbReference>
<dbReference type="ProteomicsDB" id="252573">
    <molecule id="Q9QXP6-2"/>
</dbReference>
<dbReference type="Antibodypedia" id="437">
    <property type="antibodies" value="355 antibodies from 29 providers"/>
</dbReference>
<dbReference type="Ensembl" id="ENSMUST00000114822.2">
    <molecule id="Q9QXP6-2"/>
    <property type="protein sequence ID" value="ENSMUSP00000110470.2"/>
    <property type="gene ID" value="ENSMUSG00000029922.16"/>
</dbReference>
<dbReference type="AGR" id="MGI:1859353"/>
<dbReference type="MGI" id="MGI:1859353">
    <property type="gene designation" value="Mkrn1"/>
</dbReference>
<dbReference type="VEuPathDB" id="HostDB:ENSMUSG00000029922"/>
<dbReference type="eggNOG" id="KOG1039">
    <property type="taxonomic scope" value="Eukaryota"/>
</dbReference>
<dbReference type="GeneTree" id="ENSGT00950000183077"/>
<dbReference type="HOGENOM" id="CLU_128529_0_0_1"/>
<dbReference type="InParanoid" id="Q9QXP6"/>
<dbReference type="PhylomeDB" id="Q9QXP6"/>
<dbReference type="Reactome" id="R-MMU-198323">
    <property type="pathway name" value="AKT phosphorylates targets in the cytosol"/>
</dbReference>
<dbReference type="Reactome" id="R-MMU-8948751">
    <property type="pathway name" value="Regulation of PTEN stability and activity"/>
</dbReference>
<dbReference type="Reactome" id="R-MMU-983168">
    <property type="pathway name" value="Antigen processing: Ubiquitination &amp; Proteasome degradation"/>
</dbReference>
<dbReference type="UniPathway" id="UPA00143"/>
<dbReference type="ChiTaRS" id="Mkrn1">
    <property type="organism name" value="mouse"/>
</dbReference>
<dbReference type="PRO" id="PR:Q9QXP6"/>
<dbReference type="Proteomes" id="UP000000589">
    <property type="component" value="Chromosome 6"/>
</dbReference>
<dbReference type="RNAct" id="Q9QXP6">
    <property type="molecule type" value="protein"/>
</dbReference>
<dbReference type="Bgee" id="ENSMUSG00000029922">
    <property type="expression patterns" value="Expressed in blood and 270 other cell types or tissues"/>
</dbReference>
<dbReference type="ExpressionAtlas" id="Q9QXP6">
    <property type="expression patterns" value="baseline and differential"/>
</dbReference>
<dbReference type="GO" id="GO:0003682">
    <property type="term" value="F:chromatin binding"/>
    <property type="evidence" value="ECO:0000314"/>
    <property type="project" value="MGI"/>
</dbReference>
<dbReference type="GO" id="GO:0061630">
    <property type="term" value="F:ubiquitin protein ligase activity"/>
    <property type="evidence" value="ECO:0007669"/>
    <property type="project" value="InterPro"/>
</dbReference>
<dbReference type="GO" id="GO:0008270">
    <property type="term" value="F:zinc ion binding"/>
    <property type="evidence" value="ECO:0007669"/>
    <property type="project" value="UniProtKB-KW"/>
</dbReference>
<dbReference type="GO" id="GO:1990830">
    <property type="term" value="P:cellular response to leukemia inhibitory factor"/>
    <property type="evidence" value="ECO:0000270"/>
    <property type="project" value="MGI"/>
</dbReference>
<dbReference type="GO" id="GO:0000209">
    <property type="term" value="P:protein polyubiquitination"/>
    <property type="evidence" value="ECO:0007669"/>
    <property type="project" value="InterPro"/>
</dbReference>
<dbReference type="CDD" id="cd16730">
    <property type="entry name" value="RING-HC_MKRN1_3"/>
    <property type="match status" value="1"/>
</dbReference>
<dbReference type="FunFam" id="3.30.40.10:FF:000117">
    <property type="entry name" value="Probable E3 ubiquitin-protein ligase makorin-1"/>
    <property type="match status" value="1"/>
</dbReference>
<dbReference type="FunFam" id="4.10.1000.10:FF:000044">
    <property type="entry name" value="Probable E3 ubiquitin-protein ligase makorin-2"/>
    <property type="match status" value="1"/>
</dbReference>
<dbReference type="Gene3D" id="2.30.30.1190">
    <property type="match status" value="1"/>
</dbReference>
<dbReference type="Gene3D" id="1.20.120.1350">
    <property type="entry name" value="Pneumovirus matrix protein 2 (M2), zinc-binding domain"/>
    <property type="match status" value="1"/>
</dbReference>
<dbReference type="Gene3D" id="4.10.1000.10">
    <property type="entry name" value="Zinc finger, CCCH-type"/>
    <property type="match status" value="1"/>
</dbReference>
<dbReference type="Gene3D" id="3.30.40.10">
    <property type="entry name" value="Zinc/RING finger domain, C3HC4 (zinc finger)"/>
    <property type="match status" value="1"/>
</dbReference>
<dbReference type="InterPro" id="IPR045072">
    <property type="entry name" value="MKRN-like"/>
</dbReference>
<dbReference type="InterPro" id="IPR031644">
    <property type="entry name" value="MKRN1_C"/>
</dbReference>
<dbReference type="InterPro" id="IPR041367">
    <property type="entry name" value="Znf-CCCH_4"/>
</dbReference>
<dbReference type="InterPro" id="IPR018957">
    <property type="entry name" value="Znf_C3HC4_RING-type"/>
</dbReference>
<dbReference type="InterPro" id="IPR000571">
    <property type="entry name" value="Znf_CCCH"/>
</dbReference>
<dbReference type="InterPro" id="IPR036855">
    <property type="entry name" value="Znf_CCCH_sf"/>
</dbReference>
<dbReference type="InterPro" id="IPR001841">
    <property type="entry name" value="Znf_RING"/>
</dbReference>
<dbReference type="InterPro" id="IPR013083">
    <property type="entry name" value="Znf_RING/FYVE/PHD"/>
</dbReference>
<dbReference type="InterPro" id="IPR017907">
    <property type="entry name" value="Znf_RING_CS"/>
</dbReference>
<dbReference type="PANTHER" id="PTHR11224:SF37">
    <property type="entry name" value="E3 UBIQUITIN-PROTEIN LIGASE MAKORIN-1"/>
    <property type="match status" value="1"/>
</dbReference>
<dbReference type="PANTHER" id="PTHR11224">
    <property type="entry name" value="MAKORIN-RELATED"/>
    <property type="match status" value="1"/>
</dbReference>
<dbReference type="Pfam" id="PF15815">
    <property type="entry name" value="MKRN1_C"/>
    <property type="match status" value="1"/>
</dbReference>
<dbReference type="Pfam" id="PF00097">
    <property type="entry name" value="zf-C3HC4"/>
    <property type="match status" value="1"/>
</dbReference>
<dbReference type="Pfam" id="PF14608">
    <property type="entry name" value="zf-CCCH_2"/>
    <property type="match status" value="1"/>
</dbReference>
<dbReference type="Pfam" id="PF18044">
    <property type="entry name" value="zf-CCCH_4"/>
    <property type="match status" value="3"/>
</dbReference>
<dbReference type="SMART" id="SM00184">
    <property type="entry name" value="RING"/>
    <property type="match status" value="1"/>
</dbReference>
<dbReference type="SMART" id="SM00356">
    <property type="entry name" value="ZnF_C3H1"/>
    <property type="match status" value="4"/>
</dbReference>
<dbReference type="SUPFAM" id="SSF90229">
    <property type="entry name" value="CCCH zinc finger"/>
    <property type="match status" value="3"/>
</dbReference>
<dbReference type="SUPFAM" id="SSF57850">
    <property type="entry name" value="RING/U-box"/>
    <property type="match status" value="1"/>
</dbReference>
<dbReference type="PROSITE" id="PS50103">
    <property type="entry name" value="ZF_C3H1"/>
    <property type="match status" value="4"/>
</dbReference>
<dbReference type="PROSITE" id="PS00518">
    <property type="entry name" value="ZF_RING_1"/>
    <property type="match status" value="1"/>
</dbReference>
<dbReference type="PROSITE" id="PS50089">
    <property type="entry name" value="ZF_RING_2"/>
    <property type="match status" value="1"/>
</dbReference>
<gene>
    <name type="primary">Mkrn1</name>
</gene>
<feature type="chain" id="PRO_0000055954" description="E3 ubiquitin-protein ligase makorin-1">
    <location>
        <begin position="1"/>
        <end position="481"/>
    </location>
</feature>
<feature type="zinc finger region" description="C3H1-type 1" evidence="3">
    <location>
        <begin position="55"/>
        <end position="82"/>
    </location>
</feature>
<feature type="zinc finger region" description="C3H1-type 2" evidence="3">
    <location>
        <begin position="84"/>
        <end position="111"/>
    </location>
</feature>
<feature type="zinc finger region" description="C3H1-type 3" evidence="3">
    <location>
        <begin position="208"/>
        <end position="235"/>
    </location>
</feature>
<feature type="zinc finger region" description="RING-type" evidence="2">
    <location>
        <begin position="281"/>
        <end position="335"/>
    </location>
</feature>
<feature type="zinc finger region" description="C3H1-type 4" evidence="3">
    <location>
        <begin position="364"/>
        <end position="393"/>
    </location>
</feature>
<feature type="region of interest" description="Makorin-type Cys-His">
    <location>
        <begin position="236"/>
        <end position="263"/>
    </location>
</feature>
<feature type="splice variant" id="VSP_038081" description="In isoform 2." evidence="10">
    <original>TAPSCTEVPPQGSVT</original>
    <variation>SKYCEDPVNCNQRAK</variation>
    <location>
        <begin position="182"/>
        <end position="196"/>
    </location>
</feature>
<feature type="splice variant" id="VSP_038082" description="In isoform 2." evidence="10">
    <location>
        <begin position="197"/>
        <end position="481"/>
    </location>
</feature>
<organism>
    <name type="scientific">Mus musculus</name>
    <name type="common">Mouse</name>
    <dbReference type="NCBI Taxonomy" id="10090"/>
    <lineage>
        <taxon>Eukaryota</taxon>
        <taxon>Metazoa</taxon>
        <taxon>Chordata</taxon>
        <taxon>Craniata</taxon>
        <taxon>Vertebrata</taxon>
        <taxon>Euteleostomi</taxon>
        <taxon>Mammalia</taxon>
        <taxon>Eutheria</taxon>
        <taxon>Euarchontoglires</taxon>
        <taxon>Glires</taxon>
        <taxon>Rodentia</taxon>
        <taxon>Myomorpha</taxon>
        <taxon>Muroidea</taxon>
        <taxon>Muridae</taxon>
        <taxon>Murinae</taxon>
        <taxon>Mus</taxon>
        <taxon>Mus</taxon>
    </lineage>
</organism>
<evidence type="ECO:0000250" key="1"/>
<evidence type="ECO:0000255" key="2">
    <source>
        <dbReference type="PROSITE-ProRule" id="PRU00175"/>
    </source>
</evidence>
<evidence type="ECO:0000255" key="3">
    <source>
        <dbReference type="PROSITE-ProRule" id="PRU00723"/>
    </source>
</evidence>
<evidence type="ECO:0000269" key="4">
    <source>
    </source>
</evidence>
<evidence type="ECO:0000269" key="5">
    <source>
    </source>
</evidence>
<evidence type="ECO:0000269" key="6">
    <source>
    </source>
</evidence>
<evidence type="ECO:0000269" key="7">
    <source>
    </source>
</evidence>
<evidence type="ECO:0000269" key="8">
    <source>
    </source>
</evidence>
<evidence type="ECO:0000269" key="9">
    <source>
    </source>
</evidence>
<evidence type="ECO:0000305" key="10"/>
<comment type="function">
    <text evidence="1 8">E3 ubiquitin ligase catalyzing the covalent attachment of ubiquitin moieties onto substrate proteins. These substrates include FILIP1, p53/TP53, CDKN1A and TERT. Keeps cells alive by suppressing p53/TP53 under normal conditions, but stimulates apoptosis by repressing CDKN1A under stress conditions. Acts as a negative regulator of telomerase (By similarity). Has negative and positive effects on RNA polymerase II-dependent transcription.</text>
</comment>
<comment type="catalytic activity">
    <reaction>
        <text>S-ubiquitinyl-[E2 ubiquitin-conjugating enzyme]-L-cysteine + [acceptor protein]-L-lysine = [E2 ubiquitin-conjugating enzyme]-L-cysteine + N(6)-ubiquitinyl-[acceptor protein]-L-lysine.</text>
        <dbReference type="EC" id="2.3.2.27"/>
    </reaction>
</comment>
<comment type="pathway">
    <text>Protein modification; protein ubiquitination.</text>
</comment>
<comment type="subunit">
    <text evidence="1">Interacts with p53/TP53 and CDKN1A. Interacts with TERT, modulating telomere length homeostasis (By similarity).</text>
</comment>
<comment type="alternative products">
    <event type="alternative splicing"/>
    <isoform>
        <id>Q9QXP6-1</id>
        <name>1</name>
        <sequence type="displayed"/>
    </isoform>
    <isoform>
        <id>Q9QXP6-2</id>
        <name>2</name>
        <sequence type="described" ref="VSP_038081 VSP_038082"/>
    </isoform>
</comment>
<comment type="tissue specificity">
    <text evidence="4 5 7">Highly expressed in embryo, in specific cell types of the central nervous system, in brain with the strongest levels of expression in the mantle layers and in testis. Moderate to low levels in somatic tissues.</text>
</comment>
<comment type="developmental stage">
    <text evidence="4">Not detected until 11 dpc. Restricted to developing central nervous system in 13 days embryos.</text>
</comment>
<comment type="PTM">
    <text evidence="1">Auto-ubiquitinated; which leads to proteasomal degradation.</text>
</comment>
<comment type="disruption phenotype">
    <text evidence="6 9">PubMed:12968785 describes 80 % of lethality within 2 days of birth in heterozygotes and polycystic kidney and bone deformity in survivors. However, PubMed:16882727 reports no apparent developmental deficits with viable and fertile mice.</text>
</comment>
<comment type="caution">
    <text evidence="10">PubMed:12968785 shows that the expression of the transcribed processed pseudogenes (TPP) Makorin1-p1 prevents the decay of functional Mkrn1 mRNAs. In contrast, PubMed:16882727 shows that Makorin1-p1 is not transcribed and that the putative transcripts represent an alternative isoform of the Mkrn1 source gene.</text>
</comment>